<accession>B4F1Q4</accession>
<proteinExistence type="inferred from homology"/>
<protein>
    <recommendedName>
        <fullName evidence="1">Formate-dependent phosphoribosylglycinamide formyltransferase</fullName>
        <ecNumber evidence="1">6.3.1.21</ecNumber>
    </recommendedName>
    <alternativeName>
        <fullName evidence="1">5'-phosphoribosylglycinamide transformylase 2</fullName>
    </alternativeName>
    <alternativeName>
        <fullName evidence="1">Formate-dependent GAR transformylase</fullName>
    </alternativeName>
    <alternativeName>
        <fullName evidence="1">GAR transformylase 2</fullName>
        <shortName evidence="1">GART 2</shortName>
    </alternativeName>
    <alternativeName>
        <fullName evidence="1">Non-folate glycinamide ribonucleotide transformylase</fullName>
    </alternativeName>
    <alternativeName>
        <fullName evidence="1">Phosphoribosylglycinamide formyltransferase 2</fullName>
    </alternativeName>
</protein>
<name>PURT_PROMH</name>
<dbReference type="EC" id="6.3.1.21" evidence="1"/>
<dbReference type="EMBL" id="AM942759">
    <property type="protein sequence ID" value="CAR44347.1"/>
    <property type="molecule type" value="Genomic_DNA"/>
</dbReference>
<dbReference type="RefSeq" id="WP_012368277.1">
    <property type="nucleotide sequence ID" value="NC_010554.1"/>
</dbReference>
<dbReference type="SMR" id="B4F1Q4"/>
<dbReference type="EnsemblBacteria" id="CAR44347">
    <property type="protein sequence ID" value="CAR44347"/>
    <property type="gene ID" value="PMI2187"/>
</dbReference>
<dbReference type="GeneID" id="6800748"/>
<dbReference type="KEGG" id="pmr:PMI2187"/>
<dbReference type="PATRIC" id="fig|529507.6.peg.2133"/>
<dbReference type="eggNOG" id="COG0027">
    <property type="taxonomic scope" value="Bacteria"/>
</dbReference>
<dbReference type="HOGENOM" id="CLU_011534_1_3_6"/>
<dbReference type="UniPathway" id="UPA00074">
    <property type="reaction ID" value="UER00127"/>
</dbReference>
<dbReference type="Proteomes" id="UP000008319">
    <property type="component" value="Chromosome"/>
</dbReference>
<dbReference type="GO" id="GO:0005829">
    <property type="term" value="C:cytosol"/>
    <property type="evidence" value="ECO:0007669"/>
    <property type="project" value="TreeGrafter"/>
</dbReference>
<dbReference type="GO" id="GO:0005524">
    <property type="term" value="F:ATP binding"/>
    <property type="evidence" value="ECO:0007669"/>
    <property type="project" value="UniProtKB-UniRule"/>
</dbReference>
<dbReference type="GO" id="GO:0000287">
    <property type="term" value="F:magnesium ion binding"/>
    <property type="evidence" value="ECO:0007669"/>
    <property type="project" value="InterPro"/>
</dbReference>
<dbReference type="GO" id="GO:0043815">
    <property type="term" value="F:phosphoribosylglycinamide formyltransferase 2 activity"/>
    <property type="evidence" value="ECO:0007669"/>
    <property type="project" value="UniProtKB-UniRule"/>
</dbReference>
<dbReference type="GO" id="GO:0004644">
    <property type="term" value="F:phosphoribosylglycinamide formyltransferase activity"/>
    <property type="evidence" value="ECO:0007669"/>
    <property type="project" value="InterPro"/>
</dbReference>
<dbReference type="GO" id="GO:0006189">
    <property type="term" value="P:'de novo' IMP biosynthetic process"/>
    <property type="evidence" value="ECO:0007669"/>
    <property type="project" value="UniProtKB-UniRule"/>
</dbReference>
<dbReference type="FunFam" id="3.30.1490.20:FF:000013">
    <property type="entry name" value="Formate-dependent phosphoribosylglycinamide formyltransferase"/>
    <property type="match status" value="1"/>
</dbReference>
<dbReference type="FunFam" id="3.30.470.20:FF:000027">
    <property type="entry name" value="Formate-dependent phosphoribosylglycinamide formyltransferase"/>
    <property type="match status" value="1"/>
</dbReference>
<dbReference type="FunFam" id="3.40.50.20:FF:000007">
    <property type="entry name" value="Formate-dependent phosphoribosylglycinamide formyltransferase"/>
    <property type="match status" value="1"/>
</dbReference>
<dbReference type="Gene3D" id="3.40.50.20">
    <property type="match status" value="1"/>
</dbReference>
<dbReference type="Gene3D" id="3.30.1490.20">
    <property type="entry name" value="ATP-grasp fold, A domain"/>
    <property type="match status" value="1"/>
</dbReference>
<dbReference type="Gene3D" id="3.30.470.20">
    <property type="entry name" value="ATP-grasp fold, B domain"/>
    <property type="match status" value="1"/>
</dbReference>
<dbReference type="HAMAP" id="MF_01643">
    <property type="entry name" value="PurT"/>
    <property type="match status" value="1"/>
</dbReference>
<dbReference type="InterPro" id="IPR011761">
    <property type="entry name" value="ATP-grasp"/>
</dbReference>
<dbReference type="InterPro" id="IPR003135">
    <property type="entry name" value="ATP-grasp_carboxylate-amine"/>
</dbReference>
<dbReference type="InterPro" id="IPR013815">
    <property type="entry name" value="ATP_grasp_subdomain_1"/>
</dbReference>
<dbReference type="InterPro" id="IPR016185">
    <property type="entry name" value="PreATP-grasp_dom_sf"/>
</dbReference>
<dbReference type="InterPro" id="IPR005862">
    <property type="entry name" value="PurT"/>
</dbReference>
<dbReference type="InterPro" id="IPR054350">
    <property type="entry name" value="PurT/PurK_preATP-grasp"/>
</dbReference>
<dbReference type="InterPro" id="IPR048740">
    <property type="entry name" value="PurT_C"/>
</dbReference>
<dbReference type="InterPro" id="IPR011054">
    <property type="entry name" value="Rudment_hybrid_motif"/>
</dbReference>
<dbReference type="NCBIfam" id="NF006766">
    <property type="entry name" value="PRK09288.1"/>
    <property type="match status" value="1"/>
</dbReference>
<dbReference type="NCBIfam" id="TIGR01142">
    <property type="entry name" value="purT"/>
    <property type="match status" value="1"/>
</dbReference>
<dbReference type="PANTHER" id="PTHR43055">
    <property type="entry name" value="FORMATE-DEPENDENT PHOSPHORIBOSYLGLYCINAMIDE FORMYLTRANSFERASE"/>
    <property type="match status" value="1"/>
</dbReference>
<dbReference type="PANTHER" id="PTHR43055:SF1">
    <property type="entry name" value="FORMATE-DEPENDENT PHOSPHORIBOSYLGLYCINAMIDE FORMYLTRANSFERASE"/>
    <property type="match status" value="1"/>
</dbReference>
<dbReference type="Pfam" id="PF02222">
    <property type="entry name" value="ATP-grasp"/>
    <property type="match status" value="1"/>
</dbReference>
<dbReference type="Pfam" id="PF21244">
    <property type="entry name" value="PurT_C"/>
    <property type="match status" value="1"/>
</dbReference>
<dbReference type="Pfam" id="PF22660">
    <property type="entry name" value="RS_preATP-grasp-like"/>
    <property type="match status" value="1"/>
</dbReference>
<dbReference type="SUPFAM" id="SSF56059">
    <property type="entry name" value="Glutathione synthetase ATP-binding domain-like"/>
    <property type="match status" value="1"/>
</dbReference>
<dbReference type="SUPFAM" id="SSF52440">
    <property type="entry name" value="PreATP-grasp domain"/>
    <property type="match status" value="1"/>
</dbReference>
<dbReference type="SUPFAM" id="SSF51246">
    <property type="entry name" value="Rudiment single hybrid motif"/>
    <property type="match status" value="1"/>
</dbReference>
<dbReference type="PROSITE" id="PS50975">
    <property type="entry name" value="ATP_GRASP"/>
    <property type="match status" value="1"/>
</dbReference>
<organism>
    <name type="scientific">Proteus mirabilis (strain HI4320)</name>
    <dbReference type="NCBI Taxonomy" id="529507"/>
    <lineage>
        <taxon>Bacteria</taxon>
        <taxon>Pseudomonadati</taxon>
        <taxon>Pseudomonadota</taxon>
        <taxon>Gammaproteobacteria</taxon>
        <taxon>Enterobacterales</taxon>
        <taxon>Morganellaceae</taxon>
        <taxon>Proteus</taxon>
    </lineage>
</organism>
<feature type="chain" id="PRO_1000186886" description="Formate-dependent phosphoribosylglycinamide formyltransferase">
    <location>
        <begin position="1"/>
        <end position="399"/>
    </location>
</feature>
<feature type="domain" description="ATP-grasp" evidence="1">
    <location>
        <begin position="119"/>
        <end position="308"/>
    </location>
</feature>
<feature type="binding site" evidence="1">
    <location>
        <begin position="22"/>
        <end position="23"/>
    </location>
    <ligand>
        <name>N(1)-(5-phospho-beta-D-ribosyl)glycinamide</name>
        <dbReference type="ChEBI" id="CHEBI:143788"/>
    </ligand>
</feature>
<feature type="binding site" evidence="1">
    <location>
        <position position="82"/>
    </location>
    <ligand>
        <name>N(1)-(5-phospho-beta-D-ribosyl)glycinamide</name>
        <dbReference type="ChEBI" id="CHEBI:143788"/>
    </ligand>
</feature>
<feature type="binding site" evidence="1">
    <location>
        <position position="114"/>
    </location>
    <ligand>
        <name>ATP</name>
        <dbReference type="ChEBI" id="CHEBI:30616"/>
    </ligand>
</feature>
<feature type="binding site" evidence="1">
    <location>
        <position position="155"/>
    </location>
    <ligand>
        <name>ATP</name>
        <dbReference type="ChEBI" id="CHEBI:30616"/>
    </ligand>
</feature>
<feature type="binding site" evidence="1">
    <location>
        <begin position="160"/>
        <end position="165"/>
    </location>
    <ligand>
        <name>ATP</name>
        <dbReference type="ChEBI" id="CHEBI:30616"/>
    </ligand>
</feature>
<feature type="binding site" evidence="1">
    <location>
        <begin position="195"/>
        <end position="198"/>
    </location>
    <ligand>
        <name>ATP</name>
        <dbReference type="ChEBI" id="CHEBI:30616"/>
    </ligand>
</feature>
<feature type="binding site" evidence="1">
    <location>
        <position position="203"/>
    </location>
    <ligand>
        <name>ATP</name>
        <dbReference type="ChEBI" id="CHEBI:30616"/>
    </ligand>
</feature>
<feature type="binding site" evidence="1">
    <location>
        <position position="267"/>
    </location>
    <ligand>
        <name>Mg(2+)</name>
        <dbReference type="ChEBI" id="CHEBI:18420"/>
    </ligand>
</feature>
<feature type="binding site" evidence="1">
    <location>
        <position position="279"/>
    </location>
    <ligand>
        <name>Mg(2+)</name>
        <dbReference type="ChEBI" id="CHEBI:18420"/>
    </ligand>
</feature>
<feature type="binding site" evidence="1">
    <location>
        <position position="286"/>
    </location>
    <ligand>
        <name>N(1)-(5-phospho-beta-D-ribosyl)glycinamide</name>
        <dbReference type="ChEBI" id="CHEBI:143788"/>
    </ligand>
</feature>
<feature type="binding site" evidence="1">
    <location>
        <position position="355"/>
    </location>
    <ligand>
        <name>N(1)-(5-phospho-beta-D-ribosyl)glycinamide</name>
        <dbReference type="ChEBI" id="CHEBI:143788"/>
    </ligand>
</feature>
<feature type="binding site" evidence="1">
    <location>
        <begin position="362"/>
        <end position="363"/>
    </location>
    <ligand>
        <name>N(1)-(5-phospho-beta-D-ribosyl)glycinamide</name>
        <dbReference type="ChEBI" id="CHEBI:143788"/>
    </ligand>
</feature>
<gene>
    <name evidence="1" type="primary">purT</name>
    <name type="ordered locus">PMI2187</name>
</gene>
<keyword id="KW-0067">ATP-binding</keyword>
<keyword id="KW-0436">Ligase</keyword>
<keyword id="KW-0460">Magnesium</keyword>
<keyword id="KW-0479">Metal-binding</keyword>
<keyword id="KW-0547">Nucleotide-binding</keyword>
<keyword id="KW-0658">Purine biosynthesis</keyword>
<keyword id="KW-1185">Reference proteome</keyword>
<evidence type="ECO:0000255" key="1">
    <source>
        <dbReference type="HAMAP-Rule" id="MF_01643"/>
    </source>
</evidence>
<reference key="1">
    <citation type="journal article" date="2008" name="J. Bacteriol.">
        <title>Complete genome sequence of uropathogenic Proteus mirabilis, a master of both adherence and motility.</title>
        <authorList>
            <person name="Pearson M.M."/>
            <person name="Sebaihia M."/>
            <person name="Churcher C."/>
            <person name="Quail M.A."/>
            <person name="Seshasayee A.S."/>
            <person name="Luscombe N.M."/>
            <person name="Abdellah Z."/>
            <person name="Arrosmith C."/>
            <person name="Atkin B."/>
            <person name="Chillingworth T."/>
            <person name="Hauser H."/>
            <person name="Jagels K."/>
            <person name="Moule S."/>
            <person name="Mungall K."/>
            <person name="Norbertczak H."/>
            <person name="Rabbinowitsch E."/>
            <person name="Walker D."/>
            <person name="Whithead S."/>
            <person name="Thomson N.R."/>
            <person name="Rather P.N."/>
            <person name="Parkhill J."/>
            <person name="Mobley H.L.T."/>
        </authorList>
    </citation>
    <scope>NUCLEOTIDE SEQUENCE [LARGE SCALE GENOMIC DNA]</scope>
    <source>
        <strain>HI4320</strain>
    </source>
</reference>
<sequence length="399" mass="43600">MTILGTALTTNATKVMLLGAGELGKEVIIECQRLGIETIAVDRYANAPAMHVAHRHYVVNMLDSEALKQIITQEKPDFLVPEIEAIATSLLVELENNGQKVVPCARAVKLTMDREGIRRLAAETLHLLTSPYQFVDDEAAFRKAAVEIGFPCIVKPVMSSSGKGQSVIRSEQDLTSAWTYSQEGGRAGQGRVIVEKMIPFDFEITLLTIRAIDGIHFCEPIGHRQEKGDYRASWQPQKMSDIALAKAQHIASKVVENLGGYGLFGVELFIQGDEVFFNEVSPRPHDTGLVTLISQDLSEFALHVRAFLGYPIGGIRQLGACASAVILPELSSTNIVYTGLEKALKANRQIRLFAKPEIAGHRRLGVVLAHADSIKHAIEEANLGAQAILAHDGDNHLSR</sequence>
<comment type="function">
    <text evidence="1">Involved in the de novo purine biosynthesis. Catalyzes the transfer of formate to 5-phospho-ribosyl-glycinamide (GAR), producing 5-phospho-ribosyl-N-formylglycinamide (FGAR). Formate is provided by PurU via hydrolysis of 10-formyl-tetrahydrofolate.</text>
</comment>
<comment type="catalytic activity">
    <reaction evidence="1">
        <text>N(1)-(5-phospho-beta-D-ribosyl)glycinamide + formate + ATP = N(2)-formyl-N(1)-(5-phospho-beta-D-ribosyl)glycinamide + ADP + phosphate + H(+)</text>
        <dbReference type="Rhea" id="RHEA:24829"/>
        <dbReference type="ChEBI" id="CHEBI:15378"/>
        <dbReference type="ChEBI" id="CHEBI:15740"/>
        <dbReference type="ChEBI" id="CHEBI:30616"/>
        <dbReference type="ChEBI" id="CHEBI:43474"/>
        <dbReference type="ChEBI" id="CHEBI:143788"/>
        <dbReference type="ChEBI" id="CHEBI:147286"/>
        <dbReference type="ChEBI" id="CHEBI:456216"/>
        <dbReference type="EC" id="6.3.1.21"/>
    </reaction>
    <physiologicalReaction direction="left-to-right" evidence="1">
        <dbReference type="Rhea" id="RHEA:24830"/>
    </physiologicalReaction>
</comment>
<comment type="pathway">
    <text evidence="1">Purine metabolism; IMP biosynthesis via de novo pathway; N(2)-formyl-N(1)-(5-phospho-D-ribosyl)glycinamide from N(1)-(5-phospho-D-ribosyl)glycinamide (formate route): step 1/1.</text>
</comment>
<comment type="subunit">
    <text evidence="1">Homodimer.</text>
</comment>
<comment type="similarity">
    <text evidence="1">Belongs to the PurK/PurT family.</text>
</comment>